<organism>
    <name type="scientific">Pelodiscus sinensis japonicus</name>
    <name type="common">Chinese soft-shelled turtle</name>
    <dbReference type="NCBI Taxonomy" id="34908"/>
    <lineage>
        <taxon>Eukaryota</taxon>
        <taxon>Metazoa</taxon>
        <taxon>Chordata</taxon>
        <taxon>Craniata</taxon>
        <taxon>Vertebrata</taxon>
        <taxon>Euteleostomi</taxon>
        <taxon>Archelosauria</taxon>
        <taxon>Testudinata</taxon>
        <taxon>Testudines</taxon>
        <taxon>Cryptodira</taxon>
        <taxon>Trionychia</taxon>
        <taxon>Trionychidae</taxon>
        <taxon>Pelodiscus</taxon>
    </lineage>
</organism>
<gene>
    <name type="primary">LDHB</name>
</gene>
<name>LDHB_PELSJ</name>
<sequence>MATLQEKLITPIVAGSTTPNNKITVVGVGQVGMACAISILGKGLCDELALVDVLEDKLKGEMMDLQHGSLFLQTHKIVADKDLRVTANSKIVVVTAGVRQQEGESRLNLVQRNVNVFKFIIPQIMKYSPNCTILVVSNPVDILTYVTWKLSGLPKHRVIGSGCNLDSARFRHLMAEKLGIHPTSCHGWILGEHGDSSVAVWSGVNVAGVSLQELNPAMGTDKDSENWKEVHKMVVDSAYEVIKLKGYTNWAIGLSVADLIESYVKNLCRVHPVSTMVKGMYGIENEVFLSLPCVLSASGLTSVINQKLKDEEVAQLRKSADTLWSIQKDLKDL</sequence>
<keyword id="KW-0963">Cytoplasm</keyword>
<keyword id="KW-0520">NAD</keyword>
<keyword id="KW-0560">Oxidoreductase</keyword>
<accession>Q98SK9</accession>
<proteinExistence type="evidence at transcript level"/>
<feature type="initiator methionine" description="Removed" evidence="1">
    <location>
        <position position="1"/>
    </location>
</feature>
<feature type="chain" id="PRO_0000168470" description="L-lactate dehydrogenase B chain">
    <location>
        <begin position="2"/>
        <end position="333"/>
    </location>
</feature>
<feature type="active site" description="Proton acceptor" evidence="1">
    <location>
        <position position="193"/>
    </location>
</feature>
<feature type="binding site" evidence="1">
    <location>
        <begin position="29"/>
        <end position="57"/>
    </location>
    <ligand>
        <name>NAD(+)</name>
        <dbReference type="ChEBI" id="CHEBI:57540"/>
    </ligand>
</feature>
<feature type="binding site" evidence="1">
    <location>
        <position position="99"/>
    </location>
    <ligand>
        <name>NAD(+)</name>
        <dbReference type="ChEBI" id="CHEBI:57540"/>
    </ligand>
</feature>
<feature type="binding site" evidence="1">
    <location>
        <position position="106"/>
    </location>
    <ligand>
        <name>substrate</name>
    </ligand>
</feature>
<feature type="binding site" evidence="1">
    <location>
        <position position="138"/>
    </location>
    <ligand>
        <name>NAD(+)</name>
        <dbReference type="ChEBI" id="CHEBI:57540"/>
    </ligand>
</feature>
<feature type="binding site" evidence="1">
    <location>
        <position position="138"/>
    </location>
    <ligand>
        <name>substrate</name>
    </ligand>
</feature>
<feature type="binding site" evidence="1">
    <location>
        <position position="169"/>
    </location>
    <ligand>
        <name>substrate</name>
    </ligand>
</feature>
<feature type="binding site" evidence="1">
    <location>
        <position position="248"/>
    </location>
    <ligand>
        <name>substrate</name>
    </ligand>
</feature>
<comment type="function">
    <text evidence="2">Interconverts simultaneously and stereospecifically pyruvate and lactate with concomitant interconversion of NADH and NAD(+).</text>
</comment>
<comment type="catalytic activity">
    <reaction evidence="2">
        <text>(S)-lactate + NAD(+) = pyruvate + NADH + H(+)</text>
        <dbReference type="Rhea" id="RHEA:23444"/>
        <dbReference type="ChEBI" id="CHEBI:15361"/>
        <dbReference type="ChEBI" id="CHEBI:15378"/>
        <dbReference type="ChEBI" id="CHEBI:16651"/>
        <dbReference type="ChEBI" id="CHEBI:57540"/>
        <dbReference type="ChEBI" id="CHEBI:57945"/>
        <dbReference type="EC" id="1.1.1.27"/>
    </reaction>
    <physiologicalReaction direction="left-to-right" evidence="2">
        <dbReference type="Rhea" id="RHEA:23445"/>
    </physiologicalReaction>
    <physiologicalReaction direction="right-to-left" evidence="2">
        <dbReference type="Rhea" id="RHEA:23446"/>
    </physiologicalReaction>
</comment>
<comment type="pathway">
    <text evidence="2">Fermentation; pyruvate fermentation to lactate; (S)-lactate from pyruvate: step 1/1.</text>
</comment>
<comment type="subunit">
    <text evidence="1">Homotetramer.</text>
</comment>
<comment type="subcellular location">
    <subcellularLocation>
        <location evidence="1">Cytoplasm</location>
    </subcellularLocation>
</comment>
<comment type="similarity">
    <text evidence="3">Belongs to the LDH/MDH superfamily. LDH family.</text>
</comment>
<reference key="1">
    <citation type="journal article" date="2001" name="Gene">
        <title>Lactate dehydrogenase genes of caiman and Chinese soft-shelled turtle, with emphasis on the molecular phylogenetics and evolution of reptiles.</title>
        <authorList>
            <person name="Liao C.-H."/>
            <person name="Ho W.-Z."/>
            <person name="Huang H.-W."/>
            <person name="Kuo C.-H."/>
            <person name="Lee S.-C."/>
            <person name="Li S.S.-L."/>
        </authorList>
    </citation>
    <scope>NUCLEOTIDE SEQUENCE [MRNA]</scope>
    <source>
        <tissue>Heart</tissue>
    </source>
</reference>
<protein>
    <recommendedName>
        <fullName>L-lactate dehydrogenase B chain</fullName>
        <shortName>LDH-B</shortName>
        <ecNumber evidence="2">1.1.1.27</ecNumber>
    </recommendedName>
</protein>
<dbReference type="EC" id="1.1.1.27" evidence="2"/>
<dbReference type="EMBL" id="AF363795">
    <property type="protein sequence ID" value="AAK37573.1"/>
    <property type="molecule type" value="mRNA"/>
</dbReference>
<dbReference type="SMR" id="Q98SK9"/>
<dbReference type="UniPathway" id="UPA00554">
    <property type="reaction ID" value="UER00611"/>
</dbReference>
<dbReference type="GO" id="GO:0005737">
    <property type="term" value="C:cytoplasm"/>
    <property type="evidence" value="ECO:0007669"/>
    <property type="project" value="UniProtKB-SubCell"/>
</dbReference>
<dbReference type="GO" id="GO:0004459">
    <property type="term" value="F:L-lactate dehydrogenase activity"/>
    <property type="evidence" value="ECO:0007669"/>
    <property type="project" value="UniProtKB-EC"/>
</dbReference>
<dbReference type="GO" id="GO:0006089">
    <property type="term" value="P:lactate metabolic process"/>
    <property type="evidence" value="ECO:0007669"/>
    <property type="project" value="TreeGrafter"/>
</dbReference>
<dbReference type="CDD" id="cd05293">
    <property type="entry name" value="LDH_1"/>
    <property type="match status" value="1"/>
</dbReference>
<dbReference type="FunFam" id="3.40.50.720:FF:000029">
    <property type="entry name" value="L-lactate dehydrogenase A chain"/>
    <property type="match status" value="1"/>
</dbReference>
<dbReference type="FunFam" id="3.90.110.10:FF:000003">
    <property type="entry name" value="L-lactate dehydrogenase A chain"/>
    <property type="match status" value="1"/>
</dbReference>
<dbReference type="Gene3D" id="3.90.110.10">
    <property type="entry name" value="Lactate dehydrogenase/glycoside hydrolase, family 4, C-terminal"/>
    <property type="match status" value="1"/>
</dbReference>
<dbReference type="Gene3D" id="3.40.50.720">
    <property type="entry name" value="NAD(P)-binding Rossmann-like Domain"/>
    <property type="match status" value="1"/>
</dbReference>
<dbReference type="HAMAP" id="MF_00488">
    <property type="entry name" value="Lactate_dehydrog"/>
    <property type="match status" value="1"/>
</dbReference>
<dbReference type="InterPro" id="IPR001557">
    <property type="entry name" value="L-lactate/malate_DH"/>
</dbReference>
<dbReference type="InterPro" id="IPR011304">
    <property type="entry name" value="L-lactate_DH"/>
</dbReference>
<dbReference type="InterPro" id="IPR018177">
    <property type="entry name" value="L-lactate_DH_AS"/>
</dbReference>
<dbReference type="InterPro" id="IPR022383">
    <property type="entry name" value="Lactate/malate_DH_C"/>
</dbReference>
<dbReference type="InterPro" id="IPR001236">
    <property type="entry name" value="Lactate/malate_DH_N"/>
</dbReference>
<dbReference type="InterPro" id="IPR015955">
    <property type="entry name" value="Lactate_DH/Glyco_Ohase_4_C"/>
</dbReference>
<dbReference type="InterPro" id="IPR036291">
    <property type="entry name" value="NAD(P)-bd_dom_sf"/>
</dbReference>
<dbReference type="NCBIfam" id="TIGR01771">
    <property type="entry name" value="L-LDH-NAD"/>
    <property type="match status" value="1"/>
</dbReference>
<dbReference type="PANTHER" id="PTHR43128">
    <property type="entry name" value="L-2-HYDROXYCARBOXYLATE DEHYDROGENASE (NAD(P)(+))"/>
    <property type="match status" value="1"/>
</dbReference>
<dbReference type="PANTHER" id="PTHR43128:SF2">
    <property type="entry name" value="L-LACTATE DEHYDROGENASE B CHAIN"/>
    <property type="match status" value="1"/>
</dbReference>
<dbReference type="Pfam" id="PF02866">
    <property type="entry name" value="Ldh_1_C"/>
    <property type="match status" value="1"/>
</dbReference>
<dbReference type="Pfam" id="PF00056">
    <property type="entry name" value="Ldh_1_N"/>
    <property type="match status" value="1"/>
</dbReference>
<dbReference type="PIRSF" id="PIRSF000102">
    <property type="entry name" value="Lac_mal_DH"/>
    <property type="match status" value="1"/>
</dbReference>
<dbReference type="PRINTS" id="PR00086">
    <property type="entry name" value="LLDHDRGNASE"/>
</dbReference>
<dbReference type="SUPFAM" id="SSF56327">
    <property type="entry name" value="LDH C-terminal domain-like"/>
    <property type="match status" value="1"/>
</dbReference>
<dbReference type="SUPFAM" id="SSF51735">
    <property type="entry name" value="NAD(P)-binding Rossmann-fold domains"/>
    <property type="match status" value="1"/>
</dbReference>
<dbReference type="PROSITE" id="PS00064">
    <property type="entry name" value="L_LDH"/>
    <property type="match status" value="1"/>
</dbReference>
<evidence type="ECO:0000250" key="1"/>
<evidence type="ECO:0000250" key="2">
    <source>
        <dbReference type="UniProtKB" id="P07195"/>
    </source>
</evidence>
<evidence type="ECO:0000305" key="3"/>